<gene>
    <name type="primary">VAB2</name>
    <name type="ordered locus">KLLA0D13948g</name>
</gene>
<organism>
    <name type="scientific">Kluyveromyces lactis (strain ATCC 8585 / CBS 2359 / DSM 70799 / NBRC 1267 / NRRL Y-1140 / WM37)</name>
    <name type="common">Yeast</name>
    <name type="synonym">Candida sphaerica</name>
    <dbReference type="NCBI Taxonomy" id="284590"/>
    <lineage>
        <taxon>Eukaryota</taxon>
        <taxon>Fungi</taxon>
        <taxon>Dikarya</taxon>
        <taxon>Ascomycota</taxon>
        <taxon>Saccharomycotina</taxon>
        <taxon>Saccharomycetes</taxon>
        <taxon>Saccharomycetales</taxon>
        <taxon>Saccharomycetaceae</taxon>
        <taxon>Kluyveromyces</taxon>
    </lineage>
</organism>
<keyword id="KW-0175">Coiled coil</keyword>
<keyword id="KW-0963">Cytoplasm</keyword>
<keyword id="KW-0968">Cytoplasmic vesicle</keyword>
<keyword id="KW-1185">Reference proteome</keyword>
<keyword id="KW-0813">Transport</keyword>
<keyword id="KW-0926">Vacuole</keyword>
<accession>Q6CQV5</accession>
<proteinExistence type="inferred from homology"/>
<dbReference type="EMBL" id="CR382124">
    <property type="protein sequence ID" value="CAH00780.1"/>
    <property type="molecule type" value="Genomic_DNA"/>
</dbReference>
<dbReference type="RefSeq" id="XP_453684.1">
    <property type="nucleotide sequence ID" value="XM_453684.1"/>
</dbReference>
<dbReference type="SMR" id="Q6CQV5"/>
<dbReference type="FunCoup" id="Q6CQV5">
    <property type="interactions" value="44"/>
</dbReference>
<dbReference type="STRING" id="284590.Q6CQV5"/>
<dbReference type="PaxDb" id="284590-Q6CQV5"/>
<dbReference type="KEGG" id="kla:KLLA0_D13948g"/>
<dbReference type="HOGENOM" id="CLU_990667_0_0_1"/>
<dbReference type="InParanoid" id="Q6CQV5"/>
<dbReference type="OMA" id="HICITEP"/>
<dbReference type="Proteomes" id="UP000000598">
    <property type="component" value="Chromosome D"/>
</dbReference>
<dbReference type="GO" id="GO:0031410">
    <property type="term" value="C:cytoplasmic vesicle"/>
    <property type="evidence" value="ECO:0007669"/>
    <property type="project" value="UniProtKB-KW"/>
</dbReference>
<dbReference type="GO" id="GO:0005773">
    <property type="term" value="C:vacuole"/>
    <property type="evidence" value="ECO:0007669"/>
    <property type="project" value="UniProtKB-SubCell"/>
</dbReference>
<protein>
    <recommendedName>
        <fullName>Biogenesis of lysosome-related organelles complex 1 subunit VAB2</fullName>
        <shortName>BLOC-1 subunit VAB2</shortName>
    </recommendedName>
</protein>
<comment type="function">
    <text evidence="1">Component of the biogenesis of lysosome-related organelles complex-1 (BLOC-1) involved in endosomal cargo sorting.</text>
</comment>
<comment type="subunit">
    <text evidence="1">Component of the biogenesis of lysosome-related organelles complex-1 (BLOC-1) composed of at least BLI1, BLS1, CNL1, KXD1, SNN1 and VAB2.</text>
</comment>
<comment type="subcellular location">
    <subcellularLocation>
        <location evidence="1">Cytoplasmic vesicle</location>
    </subcellularLocation>
    <subcellularLocation>
        <location evidence="1">Vacuole</location>
    </subcellularLocation>
    <subcellularLocation>
        <location evidence="1">Cytoplasm</location>
    </subcellularLocation>
</comment>
<comment type="similarity">
    <text evidence="4">Belongs to the VAB2 family.</text>
</comment>
<name>VAB2_KLULA</name>
<reference key="1">
    <citation type="journal article" date="2004" name="Nature">
        <title>Genome evolution in yeasts.</title>
        <authorList>
            <person name="Dujon B."/>
            <person name="Sherman D."/>
            <person name="Fischer G."/>
            <person name="Durrens P."/>
            <person name="Casaregola S."/>
            <person name="Lafontaine I."/>
            <person name="de Montigny J."/>
            <person name="Marck C."/>
            <person name="Neuveglise C."/>
            <person name="Talla E."/>
            <person name="Goffard N."/>
            <person name="Frangeul L."/>
            <person name="Aigle M."/>
            <person name="Anthouard V."/>
            <person name="Babour A."/>
            <person name="Barbe V."/>
            <person name="Barnay S."/>
            <person name="Blanchin S."/>
            <person name="Beckerich J.-M."/>
            <person name="Beyne E."/>
            <person name="Bleykasten C."/>
            <person name="Boisrame A."/>
            <person name="Boyer J."/>
            <person name="Cattolico L."/>
            <person name="Confanioleri F."/>
            <person name="de Daruvar A."/>
            <person name="Despons L."/>
            <person name="Fabre E."/>
            <person name="Fairhead C."/>
            <person name="Ferry-Dumazet H."/>
            <person name="Groppi A."/>
            <person name="Hantraye F."/>
            <person name="Hennequin C."/>
            <person name="Jauniaux N."/>
            <person name="Joyet P."/>
            <person name="Kachouri R."/>
            <person name="Kerrest A."/>
            <person name="Koszul R."/>
            <person name="Lemaire M."/>
            <person name="Lesur I."/>
            <person name="Ma L."/>
            <person name="Muller H."/>
            <person name="Nicaud J.-M."/>
            <person name="Nikolski M."/>
            <person name="Oztas S."/>
            <person name="Ozier-Kalogeropoulos O."/>
            <person name="Pellenz S."/>
            <person name="Potier S."/>
            <person name="Richard G.-F."/>
            <person name="Straub M.-L."/>
            <person name="Suleau A."/>
            <person name="Swennen D."/>
            <person name="Tekaia F."/>
            <person name="Wesolowski-Louvel M."/>
            <person name="Westhof E."/>
            <person name="Wirth B."/>
            <person name="Zeniou-Meyer M."/>
            <person name="Zivanovic Y."/>
            <person name="Bolotin-Fukuhara M."/>
            <person name="Thierry A."/>
            <person name="Bouchier C."/>
            <person name="Caudron B."/>
            <person name="Scarpelli C."/>
            <person name="Gaillardin C."/>
            <person name="Weissenbach J."/>
            <person name="Wincker P."/>
            <person name="Souciet J.-L."/>
        </authorList>
    </citation>
    <scope>NUCLEOTIDE SEQUENCE [LARGE SCALE GENOMIC DNA]</scope>
    <source>
        <strain>ATCC 8585 / CBS 2359 / DSM 70799 / NBRC 1267 / NRRL Y-1140 / WM37</strain>
    </source>
</reference>
<evidence type="ECO:0000250" key="1"/>
<evidence type="ECO:0000255" key="2"/>
<evidence type="ECO:0000256" key="3">
    <source>
        <dbReference type="SAM" id="MobiDB-lite"/>
    </source>
</evidence>
<evidence type="ECO:0000305" key="4"/>
<sequence length="281" mass="31788">MSFLFYGDSKHLRKRESFHFATIEKSDYSKQLQSLPLLPSSSSLRQDHIFSNVAKEVNQISDDVAIIYSRLQEEIDTEQSQTKEVNNKINHSVKKLESSFSKLVKLRSKFTKDSDKQLKQFESKYSDIDKKVRIIRDVNEELLDYVTRNGSIKVDATQFSKISKLLQERFPESSNTTETEANKDNSGQSQNEANSESLNSSYSRQSTNGSQNNAKKDYHSTKGNSADSNTTKSYRQSISSAPLALSSIRSTSRPSIATTLEHICITEPFTRPRGMSKSADL</sequence>
<feature type="chain" id="PRO_0000320513" description="Biogenesis of lysosome-related organelles complex 1 subunit VAB2">
    <location>
        <begin position="1"/>
        <end position="281"/>
    </location>
</feature>
<feature type="region of interest" description="Disordered" evidence="3">
    <location>
        <begin position="170"/>
        <end position="235"/>
    </location>
</feature>
<feature type="coiled-coil region" evidence="2">
    <location>
        <begin position="67"/>
        <end position="92"/>
    </location>
</feature>
<feature type="compositionally biased region" description="Polar residues" evidence="3">
    <location>
        <begin position="172"/>
        <end position="213"/>
    </location>
</feature>
<feature type="compositionally biased region" description="Polar residues" evidence="3">
    <location>
        <begin position="221"/>
        <end position="235"/>
    </location>
</feature>